<comment type="function">
    <text evidence="1">Converts cobyric acid to cobinamide by the addition of aminopropanol on the F carboxylic group.</text>
</comment>
<comment type="pathway">
    <text evidence="1">Cofactor biosynthesis; adenosylcobalamin biosynthesis.</text>
</comment>
<comment type="subcellular location">
    <subcellularLocation>
        <location evidence="1">Cell membrane</location>
        <topology evidence="1">Multi-pass membrane protein</topology>
    </subcellularLocation>
</comment>
<comment type="similarity">
    <text evidence="1">Belongs to the CobD/CbiB family.</text>
</comment>
<reference key="1">
    <citation type="journal article" date="2000" name="Nucleic Acids Res.">
        <title>Complete genome sequence of the alkaliphilic bacterium Bacillus halodurans and genomic sequence comparison with Bacillus subtilis.</title>
        <authorList>
            <person name="Takami H."/>
            <person name="Nakasone K."/>
            <person name="Takaki Y."/>
            <person name="Maeno G."/>
            <person name="Sasaki R."/>
            <person name="Masui N."/>
            <person name="Fuji F."/>
            <person name="Hirama C."/>
            <person name="Nakamura Y."/>
            <person name="Ogasawara N."/>
            <person name="Kuhara S."/>
            <person name="Horikoshi K."/>
        </authorList>
    </citation>
    <scope>NUCLEOTIDE SEQUENCE [LARGE SCALE GENOMIC DNA]</scope>
    <source>
        <strain>ATCC BAA-125 / DSM 18197 / FERM 7344 / JCM 9153 / C-125</strain>
    </source>
</reference>
<organism>
    <name type="scientific">Halalkalibacterium halodurans (strain ATCC BAA-125 / DSM 18197 / FERM 7344 / JCM 9153 / C-125)</name>
    <name type="common">Bacillus halodurans</name>
    <dbReference type="NCBI Taxonomy" id="272558"/>
    <lineage>
        <taxon>Bacteria</taxon>
        <taxon>Bacillati</taxon>
        <taxon>Bacillota</taxon>
        <taxon>Bacilli</taxon>
        <taxon>Bacillales</taxon>
        <taxon>Bacillaceae</taxon>
        <taxon>Halalkalibacterium (ex Joshi et al. 2022)</taxon>
    </lineage>
</organism>
<feature type="chain" id="PRO_0000150921" description="Cobalamin biosynthesis protein CobD">
    <location>
        <begin position="1"/>
        <end position="319"/>
    </location>
</feature>
<feature type="transmembrane region" description="Helical" evidence="1">
    <location>
        <begin position="54"/>
        <end position="76"/>
    </location>
</feature>
<feature type="transmembrane region" description="Helical" evidence="1">
    <location>
        <begin position="154"/>
        <end position="173"/>
    </location>
</feature>
<feature type="transmembrane region" description="Helical" evidence="1">
    <location>
        <begin position="301"/>
        <end position="318"/>
    </location>
</feature>
<proteinExistence type="inferred from homology"/>
<sequence length="319" mass="35315">MIACHVIAIVSAFILDKWLGDPKWLPHPVVGMGKLITYFERRWNCGRWRREKGVLLLLTVLLIVTALSLALVWLSYQVHLLLGVIVEALLIASTIAAKGLKEAAEEVARPLATRNLLEARRKLSYIVGRDTDQLDEKEIARGAIETVAENTSDGVTAPLFYALIGGAPLALLYRATNTCDSMVGYKNERYRDFGWASAKFDDVLNWVPSRITGVLMLLLHRKRRQAPLGQSLKMLAREAKKHPSPNSGWGEAAMALLLHVTLGGTNTYQGMTSERAKMGYGTKAMTAKDIDESIAIMNRTVLGFLVFLFLLGGFIYAIT</sequence>
<name>COBD_HALH5</name>
<dbReference type="EMBL" id="BA000004">
    <property type="protein sequence ID" value="BAB05307.1"/>
    <property type="molecule type" value="Genomic_DNA"/>
</dbReference>
<dbReference type="PIR" id="D83848">
    <property type="entry name" value="D83848"/>
</dbReference>
<dbReference type="RefSeq" id="WP_010897751.1">
    <property type="nucleotide sequence ID" value="NC_002570.2"/>
</dbReference>
<dbReference type="STRING" id="272558.gene:10727486"/>
<dbReference type="KEGG" id="bha:BH1588"/>
<dbReference type="eggNOG" id="COG1270">
    <property type="taxonomic scope" value="Bacteria"/>
</dbReference>
<dbReference type="HOGENOM" id="CLU_054212_0_0_9"/>
<dbReference type="OrthoDB" id="9811967at2"/>
<dbReference type="UniPathway" id="UPA00148"/>
<dbReference type="Proteomes" id="UP000001258">
    <property type="component" value="Chromosome"/>
</dbReference>
<dbReference type="GO" id="GO:0005886">
    <property type="term" value="C:plasma membrane"/>
    <property type="evidence" value="ECO:0007669"/>
    <property type="project" value="UniProtKB-SubCell"/>
</dbReference>
<dbReference type="GO" id="GO:0015420">
    <property type="term" value="F:ABC-type vitamin B12 transporter activity"/>
    <property type="evidence" value="ECO:0007669"/>
    <property type="project" value="UniProtKB-UniRule"/>
</dbReference>
<dbReference type="GO" id="GO:0048472">
    <property type="term" value="F:threonine-phosphate decarboxylase activity"/>
    <property type="evidence" value="ECO:0007669"/>
    <property type="project" value="InterPro"/>
</dbReference>
<dbReference type="GO" id="GO:0009236">
    <property type="term" value="P:cobalamin biosynthetic process"/>
    <property type="evidence" value="ECO:0007669"/>
    <property type="project" value="UniProtKB-UniRule"/>
</dbReference>
<dbReference type="HAMAP" id="MF_00024">
    <property type="entry name" value="CobD_CbiB"/>
    <property type="match status" value="1"/>
</dbReference>
<dbReference type="InterPro" id="IPR004485">
    <property type="entry name" value="Cobalamin_biosynth_CobD/CbiB"/>
</dbReference>
<dbReference type="NCBIfam" id="TIGR00380">
    <property type="entry name" value="cobal_cbiB"/>
    <property type="match status" value="1"/>
</dbReference>
<dbReference type="PANTHER" id="PTHR34308">
    <property type="entry name" value="COBALAMIN BIOSYNTHESIS PROTEIN CBIB"/>
    <property type="match status" value="1"/>
</dbReference>
<dbReference type="PANTHER" id="PTHR34308:SF1">
    <property type="entry name" value="COBALAMIN BIOSYNTHESIS PROTEIN CBIB"/>
    <property type="match status" value="1"/>
</dbReference>
<dbReference type="Pfam" id="PF03186">
    <property type="entry name" value="CobD_Cbib"/>
    <property type="match status" value="1"/>
</dbReference>
<gene>
    <name evidence="1" type="primary">cobD</name>
    <name type="ordered locus">BH1588</name>
</gene>
<accession>Q9KCI3</accession>
<evidence type="ECO:0000255" key="1">
    <source>
        <dbReference type="HAMAP-Rule" id="MF_00024"/>
    </source>
</evidence>
<protein>
    <recommendedName>
        <fullName evidence="1">Cobalamin biosynthesis protein CobD</fullName>
    </recommendedName>
</protein>
<keyword id="KW-1003">Cell membrane</keyword>
<keyword id="KW-0169">Cobalamin biosynthesis</keyword>
<keyword id="KW-0472">Membrane</keyword>
<keyword id="KW-1185">Reference proteome</keyword>
<keyword id="KW-0812">Transmembrane</keyword>
<keyword id="KW-1133">Transmembrane helix</keyword>